<dbReference type="EC" id="2.3.1.268"/>
<dbReference type="EC" id="3.1.2.1"/>
<dbReference type="EC" id="3.1.1.-"/>
<dbReference type="EMBL" id="CDQK01000007">
    <property type="protein sequence ID" value="CEP25159.1"/>
    <property type="molecule type" value="Genomic_DNA"/>
</dbReference>
<dbReference type="EMBL" id="KV453929">
    <property type="protein sequence ID" value="ODV73796.1"/>
    <property type="molecule type" value="Genomic_DNA"/>
</dbReference>
<dbReference type="RefSeq" id="XP_020070835.1">
    <property type="nucleotide sequence ID" value="XM_020217351.1"/>
</dbReference>
<dbReference type="SMR" id="A0A1E4S2P1"/>
<dbReference type="STRING" id="983966.A0A1E4S2P1"/>
<dbReference type="ESTHER" id="cybja-a0a0h5ckz6">
    <property type="family name" value="ABHD11-Acetyl_transferase"/>
</dbReference>
<dbReference type="GeneID" id="30991747"/>
<dbReference type="OMA" id="FFVDSIC"/>
<dbReference type="OrthoDB" id="8119704at2759"/>
<dbReference type="Proteomes" id="UP000038830">
    <property type="component" value="Unassembled WGS sequence"/>
</dbReference>
<dbReference type="Proteomes" id="UP000094389">
    <property type="component" value="Unassembled WGS sequence"/>
</dbReference>
<dbReference type="GO" id="GO:0005739">
    <property type="term" value="C:mitochondrion"/>
    <property type="evidence" value="ECO:0007669"/>
    <property type="project" value="UniProtKB-SubCell"/>
</dbReference>
<dbReference type="GO" id="GO:0003986">
    <property type="term" value="F:acetyl-CoA hydrolase activity"/>
    <property type="evidence" value="ECO:0007669"/>
    <property type="project" value="UniProtKB-EC"/>
</dbReference>
<dbReference type="GO" id="GO:0052689">
    <property type="term" value="F:carboxylic ester hydrolase activity"/>
    <property type="evidence" value="ECO:0007669"/>
    <property type="project" value="TreeGrafter"/>
</dbReference>
<dbReference type="GO" id="GO:0016740">
    <property type="term" value="F:transferase activity"/>
    <property type="evidence" value="ECO:0007669"/>
    <property type="project" value="UniProtKB-KW"/>
</dbReference>
<dbReference type="Gene3D" id="3.40.50.1820">
    <property type="entry name" value="alpha/beta hydrolase"/>
    <property type="match status" value="1"/>
</dbReference>
<dbReference type="InterPro" id="IPR000073">
    <property type="entry name" value="AB_hydrolase_1"/>
</dbReference>
<dbReference type="InterPro" id="IPR029058">
    <property type="entry name" value="AB_hydrolase_fold"/>
</dbReference>
<dbReference type="PANTHER" id="PTHR46118">
    <property type="entry name" value="PROTEIN ABHD11"/>
    <property type="match status" value="1"/>
</dbReference>
<dbReference type="PANTHER" id="PTHR46118:SF4">
    <property type="entry name" value="PROTEIN ABHD11"/>
    <property type="match status" value="1"/>
</dbReference>
<dbReference type="Pfam" id="PF00561">
    <property type="entry name" value="Abhydrolase_1"/>
    <property type="match status" value="1"/>
</dbReference>
<dbReference type="SUPFAM" id="SSF53474">
    <property type="entry name" value="alpha/beta-Hydrolases"/>
    <property type="match status" value="1"/>
</dbReference>
<proteinExistence type="evidence at protein level"/>
<accession>A0A1E4S2P1</accession>
<accession>A0A0H5CKZ6</accession>
<organism>
    <name type="scientific">Cyberlindnera jadinii (strain ATCC 18201 / CBS 1600 / BCRC 20928 / JCM 3617 / NBRC 0987 / NRRL Y-1542)</name>
    <name type="common">Torula yeast</name>
    <name type="synonym">Candida utilis</name>
    <dbReference type="NCBI Taxonomy" id="983966"/>
    <lineage>
        <taxon>Eukaryota</taxon>
        <taxon>Fungi</taxon>
        <taxon>Dikarya</taxon>
        <taxon>Ascomycota</taxon>
        <taxon>Saccharomycotina</taxon>
        <taxon>Saccharomycetes</taxon>
        <taxon>Phaffomycetales</taxon>
        <taxon>Phaffomycetaceae</taxon>
        <taxon>Cyberlindnera</taxon>
    </lineage>
</organism>
<comment type="function">
    <text evidence="1 3">Alcohol acetyltransferase that catalyzes the synthesis of ethyl acetate from ethanol and acetyl-CoA (PubMed:28356220). Can also function as a thioesterase by hydrolyzing acetyl-CoA in the absence of ethanol, as well as esterase hydrolyzing ethyl acetate (By similarity).</text>
</comment>
<comment type="catalytic activity">
    <reaction evidence="3">
        <text>ethanol + acetyl-CoA = ethyl acetate + CoA</text>
        <dbReference type="Rhea" id="RHEA:55972"/>
        <dbReference type="ChEBI" id="CHEBI:16236"/>
        <dbReference type="ChEBI" id="CHEBI:27750"/>
        <dbReference type="ChEBI" id="CHEBI:57287"/>
        <dbReference type="ChEBI" id="CHEBI:57288"/>
        <dbReference type="EC" id="2.3.1.268"/>
    </reaction>
</comment>
<comment type="catalytic activity">
    <reaction evidence="1">
        <text>acetyl-CoA + H2O = acetate + CoA + H(+)</text>
        <dbReference type="Rhea" id="RHEA:20289"/>
        <dbReference type="ChEBI" id="CHEBI:15377"/>
        <dbReference type="ChEBI" id="CHEBI:15378"/>
        <dbReference type="ChEBI" id="CHEBI:30089"/>
        <dbReference type="ChEBI" id="CHEBI:57287"/>
        <dbReference type="ChEBI" id="CHEBI:57288"/>
        <dbReference type="EC" id="3.1.2.1"/>
    </reaction>
</comment>
<comment type="catalytic activity">
    <reaction evidence="1">
        <text>ethyl acetate + H2O = ethanol + acetate + H(+)</text>
        <dbReference type="Rhea" id="RHEA:58148"/>
        <dbReference type="ChEBI" id="CHEBI:15377"/>
        <dbReference type="ChEBI" id="CHEBI:15378"/>
        <dbReference type="ChEBI" id="CHEBI:16236"/>
        <dbReference type="ChEBI" id="CHEBI:27750"/>
        <dbReference type="ChEBI" id="CHEBI:30089"/>
    </reaction>
</comment>
<comment type="subcellular location">
    <subcellularLocation>
        <location evidence="1">Mitochondrion</location>
    </subcellularLocation>
</comment>
<comment type="similarity">
    <text evidence="4">Belongs to the AB hydrolase superfamily.</text>
</comment>
<evidence type="ECO:0000250" key="1">
    <source>
        <dbReference type="UniProtKB" id="A0A1E3P8S6"/>
    </source>
</evidence>
<evidence type="ECO:0000255" key="2"/>
<evidence type="ECO:0000269" key="3">
    <source>
    </source>
</evidence>
<evidence type="ECO:0000305" key="4"/>
<gene>
    <name type="primary">EAT1</name>
    <name type="ORF">BN1211_6162</name>
    <name type="ORF">CYBJADRAFT_189656</name>
</gene>
<reference key="1">
    <citation type="journal article" date="2015" name="J. Biotechnol.">
        <title>The structure of the Cyberlindnera jadinii genome and its relation to Candida utilis analyzed by the occurrence of single nucleotide polymorphisms.</title>
        <authorList>
            <person name="Rupp O."/>
            <person name="Brinkrolf K."/>
            <person name="Buerth C."/>
            <person name="Kunigo M."/>
            <person name="Schneider J."/>
            <person name="Jaenicke S."/>
            <person name="Goesmann A."/>
            <person name="Puehler A."/>
            <person name="Jaeger K.-E."/>
            <person name="Ernst J.F."/>
        </authorList>
    </citation>
    <scope>NUCLEOTIDE SEQUENCE [LARGE SCALE GENOMIC DNA]</scope>
    <source>
        <strain>ATCC 18201 / CBS 1600 / BCRC 20928 / JCM 3617 / NBRC 0987 / NRRL Y-1542</strain>
    </source>
</reference>
<reference key="2">
    <citation type="journal article" date="2016" name="Proc. Natl. Acad. Sci. U.S.A.">
        <title>Comparative genomics of biotechnologically important yeasts.</title>
        <authorList>
            <person name="Riley R."/>
            <person name="Haridas S."/>
            <person name="Wolfe K.H."/>
            <person name="Lopes M.R."/>
            <person name="Hittinger C.T."/>
            <person name="Goeker M."/>
            <person name="Salamov A.A."/>
            <person name="Wisecaver J.H."/>
            <person name="Long T.M."/>
            <person name="Calvey C.H."/>
            <person name="Aerts A.L."/>
            <person name="Barry K.W."/>
            <person name="Choi C."/>
            <person name="Clum A."/>
            <person name="Coughlan A.Y."/>
            <person name="Deshpande S."/>
            <person name="Douglass A.P."/>
            <person name="Hanson S.J."/>
            <person name="Klenk H.-P."/>
            <person name="LaButti K.M."/>
            <person name="Lapidus A."/>
            <person name="Lindquist E.A."/>
            <person name="Lipzen A.M."/>
            <person name="Meier-Kolthoff J.P."/>
            <person name="Ohm R.A."/>
            <person name="Otillar R.P."/>
            <person name="Pangilinan J.L."/>
            <person name="Peng Y."/>
            <person name="Rokas A."/>
            <person name="Rosa C.A."/>
            <person name="Scheuner C."/>
            <person name="Sibirny A.A."/>
            <person name="Slot J.C."/>
            <person name="Stielow J.B."/>
            <person name="Sun H."/>
            <person name="Kurtzman C.P."/>
            <person name="Blackwell M."/>
            <person name="Grigoriev I.V."/>
            <person name="Jeffries T.W."/>
        </authorList>
    </citation>
    <scope>NUCLEOTIDE SEQUENCE [LARGE SCALE GENOMIC DNA]</scope>
    <source>
        <strain>ATCC 18201 / CBS 1600 / BCRC 20928 / JCM 3617 / NBRC 0987 / NRRL Y-1542</strain>
    </source>
</reference>
<reference key="3">
    <citation type="journal article" date="2017" name="Metab. Eng.">
        <title>Ethyl acetate production by the elusive alcohol acetyltransferase from yeast.</title>
        <authorList>
            <person name="Kruis A.J."/>
            <person name="Levisson M."/>
            <person name="Mars A.E."/>
            <person name="van der Ploeg M."/>
            <person name="Garces Daza F."/>
            <person name="Ellena V."/>
            <person name="Kengen S.W.M."/>
            <person name="van der Oost J."/>
            <person name="Weusthuis R.A."/>
        </authorList>
    </citation>
    <scope>FUNCTION</scope>
    <scope>CATALYTIC ACTIVITY</scope>
    <source>
        <strain>DSM 2361</strain>
    </source>
</reference>
<keyword id="KW-0378">Hydrolase</keyword>
<keyword id="KW-0496">Mitochondrion</keyword>
<keyword id="KW-1185">Reference proteome</keyword>
<keyword id="KW-0808">Transferase</keyword>
<keyword id="KW-0809">Transit peptide</keyword>
<name>EAT1_CYBJN</name>
<sequence length="336" mass="38427">MFPTRVLRSTLQKLPHRETVPMAYDLHMPQRSLFQNLNEKHTEPIVFLHGIFGSKKSYELDSKMIAHGTHTPVYTVDIRNHGQTSHAMPFNYDTLAQDVKEFCHVQGLKSVKLVGYSLGAKISMLAALKYPELVKSAVIIDNAPVKQPYIELYMKQYVKSMLHVLEEAKIKTTDKDWKNKASDAMKKFLPNGVIRKNLLVNLVNKKPDGFESPVVNFDEGLIQFLNPIRQMEEAAVKDVTDWPEESTEGLKYNGPVKFIKGLKSPFINEEGMTKIQDIFPNNEFANVNSSHDILDQRPTEYVKIICDFFNAHRYESAPSNTIIGHKDFKTTIDMRV</sequence>
<protein>
    <recommendedName>
        <fullName>Ethanol acetyltransferase 1</fullName>
        <ecNumber>2.3.1.268</ecNumber>
    </recommendedName>
    <alternativeName>
        <fullName>Acetyl-CoA hydrolase</fullName>
        <ecNumber>3.1.2.1</ecNumber>
    </alternativeName>
    <alternativeName>
        <fullName>Acetyl-CoA thioesterase</fullName>
    </alternativeName>
    <alternativeName>
        <fullName>Alcohol acetyltransferase</fullName>
        <shortName>AAT</shortName>
    </alternativeName>
    <alternativeName>
        <fullName>Ethyl acetate esterase</fullName>
        <ecNumber>3.1.1.-</ecNumber>
    </alternativeName>
</protein>
<feature type="transit peptide" description="Mitochondrion" evidence="2">
    <location>
        <begin position="1"/>
        <end position="14"/>
    </location>
</feature>
<feature type="chain" id="PRO_0000446175" description="Ethanol acetyltransferase 1">
    <location>
        <begin position="15"/>
        <end position="336"/>
    </location>
</feature>
<feature type="domain" description="AB hydrolase-1" evidence="2">
    <location>
        <begin position="44"/>
        <end position="296"/>
    </location>
</feature>
<feature type="active site" description="Charge relay system" evidence="1">
    <location>
        <position position="117"/>
    </location>
</feature>
<feature type="active site" description="Charge relay system" evidence="1">
    <location>
        <position position="141"/>
    </location>
</feature>
<feature type="active site" description="Charge relay system" evidence="1">
    <location>
        <position position="291"/>
    </location>
</feature>